<gene>
    <name type="ordered locus">HI_1677</name>
</gene>
<dbReference type="EMBL" id="L42023">
    <property type="protein sequence ID" value="AAC23322.1"/>
    <property type="molecule type" value="Genomic_DNA"/>
</dbReference>
<dbReference type="PIR" id="F64174">
    <property type="entry name" value="F64174"/>
</dbReference>
<dbReference type="RefSeq" id="NP_439819.1">
    <property type="nucleotide sequence ID" value="NC_000907.1"/>
</dbReference>
<dbReference type="SMR" id="P45312"/>
<dbReference type="EnsemblBacteria" id="AAC23322">
    <property type="protein sequence ID" value="AAC23322"/>
    <property type="gene ID" value="HI_1677"/>
</dbReference>
<dbReference type="KEGG" id="hin:HI_1677"/>
<dbReference type="PATRIC" id="fig|71421.8.peg.1756"/>
<dbReference type="eggNOG" id="COG2846">
    <property type="taxonomic scope" value="Bacteria"/>
</dbReference>
<dbReference type="HOGENOM" id="CLU_076075_2_0_6"/>
<dbReference type="OrthoDB" id="9797132at2"/>
<dbReference type="PhylomeDB" id="P45312"/>
<dbReference type="BioCyc" id="HINF71421:G1GJ1-1692-MONOMER"/>
<dbReference type="Proteomes" id="UP000000579">
    <property type="component" value="Chromosome"/>
</dbReference>
<dbReference type="GO" id="GO:0005829">
    <property type="term" value="C:cytosol"/>
    <property type="evidence" value="ECO:0000318"/>
    <property type="project" value="GO_Central"/>
</dbReference>
<dbReference type="GO" id="GO:0005506">
    <property type="term" value="F:iron ion binding"/>
    <property type="evidence" value="ECO:0000318"/>
    <property type="project" value="GO_Central"/>
</dbReference>
<dbReference type="GO" id="GO:0098809">
    <property type="term" value="F:nitrite reductase activity"/>
    <property type="evidence" value="ECO:0000318"/>
    <property type="project" value="GO_Central"/>
</dbReference>
<dbReference type="GO" id="GO:0030091">
    <property type="term" value="P:protein repair"/>
    <property type="evidence" value="ECO:0000318"/>
    <property type="project" value="GO_Central"/>
</dbReference>
<dbReference type="CDD" id="cd12108">
    <property type="entry name" value="Hr-like"/>
    <property type="match status" value="1"/>
</dbReference>
<dbReference type="Gene3D" id="1.20.120.520">
    <property type="entry name" value="nmb1532 protein domain like"/>
    <property type="match status" value="1"/>
</dbReference>
<dbReference type="InterPro" id="IPR012312">
    <property type="entry name" value="Hemerythrin-like"/>
</dbReference>
<dbReference type="InterPro" id="IPR019903">
    <property type="entry name" value="RIC_family"/>
</dbReference>
<dbReference type="NCBIfam" id="TIGR03652">
    <property type="entry name" value="FeS_repair_RIC"/>
    <property type="match status" value="1"/>
</dbReference>
<dbReference type="NCBIfam" id="NF008221">
    <property type="entry name" value="PRK10992.1"/>
    <property type="match status" value="1"/>
</dbReference>
<dbReference type="PANTHER" id="PTHR36438">
    <property type="entry name" value="IRON-SULFUR CLUSTER REPAIR PROTEIN YTFE"/>
    <property type="match status" value="1"/>
</dbReference>
<dbReference type="PANTHER" id="PTHR36438:SF1">
    <property type="entry name" value="IRON-SULFUR CLUSTER REPAIR PROTEIN YTFE"/>
    <property type="match status" value="1"/>
</dbReference>
<dbReference type="Pfam" id="PF01814">
    <property type="entry name" value="Hemerythrin"/>
    <property type="match status" value="1"/>
</dbReference>
<dbReference type="Pfam" id="PF04405">
    <property type="entry name" value="ScdA_N"/>
    <property type="match status" value="1"/>
</dbReference>
<name>Y1677_HAEIN</name>
<accession>P45312</accession>
<comment type="function">
    <text evidence="1">Di-iron-containing protein involved in the repair of iron-sulfur clusters.</text>
</comment>
<comment type="subcellular location">
    <subcellularLocation>
        <location evidence="2">Cytoplasm</location>
    </subcellularLocation>
</comment>
<comment type="similarity">
    <text evidence="2">Belongs to the RIC family.</text>
</comment>
<evidence type="ECO:0000250" key="1"/>
<evidence type="ECO:0000305" key="2"/>
<reference key="1">
    <citation type="journal article" date="1995" name="Science">
        <title>Whole-genome random sequencing and assembly of Haemophilus influenzae Rd.</title>
        <authorList>
            <person name="Fleischmann R.D."/>
            <person name="Adams M.D."/>
            <person name="White O."/>
            <person name="Clayton R.A."/>
            <person name="Kirkness E.F."/>
            <person name="Kerlavage A.R."/>
            <person name="Bult C.J."/>
            <person name="Tomb J.-F."/>
            <person name="Dougherty B.A."/>
            <person name="Merrick J.M."/>
            <person name="McKenney K."/>
            <person name="Sutton G.G."/>
            <person name="FitzHugh W."/>
            <person name="Fields C.A."/>
            <person name="Gocayne J.D."/>
            <person name="Scott J.D."/>
            <person name="Shirley R."/>
            <person name="Liu L.-I."/>
            <person name="Glodek A."/>
            <person name="Kelley J.M."/>
            <person name="Weidman J.F."/>
            <person name="Phillips C.A."/>
            <person name="Spriggs T."/>
            <person name="Hedblom E."/>
            <person name="Cotton M.D."/>
            <person name="Utterback T.R."/>
            <person name="Hanna M.C."/>
            <person name="Nguyen D.T."/>
            <person name="Saudek D.M."/>
            <person name="Brandon R.C."/>
            <person name="Fine L.D."/>
            <person name="Fritchman J.L."/>
            <person name="Fuhrmann J.L."/>
            <person name="Geoghagen N.S.M."/>
            <person name="Gnehm C.L."/>
            <person name="McDonald L.A."/>
            <person name="Small K.V."/>
            <person name="Fraser C.M."/>
            <person name="Smith H.O."/>
            <person name="Venter J.C."/>
        </authorList>
    </citation>
    <scope>NUCLEOTIDE SEQUENCE [LARGE SCALE GENOMIC DNA]</scope>
    <source>
        <strain>ATCC 51907 / DSM 11121 / KW20 / Rd</strain>
    </source>
</reference>
<feature type="chain" id="PRO_0000169823" description="Probable iron-sulfur cluster repair protein HI_1677">
    <location>
        <begin position="1"/>
        <end position="223"/>
    </location>
</feature>
<sequence length="223" mass="25489">MSFAQQKLSELAVSIPGATKIFREYDLDFCCGGSVLLEVAAQQKNLNLAEIEKRLTDLQQSKAENNDKDWTSASYAEMIDHIITRFHNRHREQLPELITLAEKVENIHGDRDDCPIGVVAQLEKIYAELSQHLMKEEQILFPMIKMGNYAMASMPIRVMEMEHDEAGQDVEVIKSLTNNCTPPADACFSWKALYSGINEFIDDLMHHIHLENNILFPRVLNEK</sequence>
<proteinExistence type="inferred from homology"/>
<organism>
    <name type="scientific">Haemophilus influenzae (strain ATCC 51907 / DSM 11121 / KW20 / Rd)</name>
    <dbReference type="NCBI Taxonomy" id="71421"/>
    <lineage>
        <taxon>Bacteria</taxon>
        <taxon>Pseudomonadati</taxon>
        <taxon>Pseudomonadota</taxon>
        <taxon>Gammaproteobacteria</taxon>
        <taxon>Pasteurellales</taxon>
        <taxon>Pasteurellaceae</taxon>
        <taxon>Haemophilus</taxon>
    </lineage>
</organism>
<keyword id="KW-0963">Cytoplasm</keyword>
<keyword id="KW-0408">Iron</keyword>
<keyword id="KW-0479">Metal-binding</keyword>
<keyword id="KW-1185">Reference proteome</keyword>
<protein>
    <recommendedName>
        <fullName>Probable iron-sulfur cluster repair protein HI_1677</fullName>
    </recommendedName>
</protein>